<reference key="1">
    <citation type="journal article" date="1998" name="Genetics">
        <title>Histone deacetylase homologs regulate epigenetic inheritance of transcriptional silencing and chromosome segregation in fission yeast.</title>
        <authorList>
            <person name="Grewal S.I.S."/>
            <person name="Bonaduce M.J."/>
            <person name="Klar A.J.S."/>
        </authorList>
    </citation>
    <scope>NUCLEOTIDE SEQUENCE [GENOMIC DNA]</scope>
    <source>
        <strain>972 / ATCC 24843</strain>
    </source>
</reference>
<reference key="2">
    <citation type="journal article" date="2002" name="Nature">
        <title>The genome sequence of Schizosaccharomyces pombe.</title>
        <authorList>
            <person name="Wood V."/>
            <person name="Gwilliam R."/>
            <person name="Rajandream M.A."/>
            <person name="Lyne M.H."/>
            <person name="Lyne R."/>
            <person name="Stewart A."/>
            <person name="Sgouros J.G."/>
            <person name="Peat N."/>
            <person name="Hayles J."/>
            <person name="Baker S.G."/>
            <person name="Basham D."/>
            <person name="Bowman S."/>
            <person name="Brooks K."/>
            <person name="Brown D."/>
            <person name="Brown S."/>
            <person name="Chillingworth T."/>
            <person name="Churcher C.M."/>
            <person name="Collins M."/>
            <person name="Connor R."/>
            <person name="Cronin A."/>
            <person name="Davis P."/>
            <person name="Feltwell T."/>
            <person name="Fraser A."/>
            <person name="Gentles S."/>
            <person name="Goble A."/>
            <person name="Hamlin N."/>
            <person name="Harris D.E."/>
            <person name="Hidalgo J."/>
            <person name="Hodgson G."/>
            <person name="Holroyd S."/>
            <person name="Hornsby T."/>
            <person name="Howarth S."/>
            <person name="Huckle E.J."/>
            <person name="Hunt S."/>
            <person name="Jagels K."/>
            <person name="James K.D."/>
            <person name="Jones L."/>
            <person name="Jones M."/>
            <person name="Leather S."/>
            <person name="McDonald S."/>
            <person name="McLean J."/>
            <person name="Mooney P."/>
            <person name="Moule S."/>
            <person name="Mungall K.L."/>
            <person name="Murphy L.D."/>
            <person name="Niblett D."/>
            <person name="Odell C."/>
            <person name="Oliver K."/>
            <person name="O'Neil S."/>
            <person name="Pearson D."/>
            <person name="Quail M.A."/>
            <person name="Rabbinowitsch E."/>
            <person name="Rutherford K.M."/>
            <person name="Rutter S."/>
            <person name="Saunders D."/>
            <person name="Seeger K."/>
            <person name="Sharp S."/>
            <person name="Skelton J."/>
            <person name="Simmonds M.N."/>
            <person name="Squares R."/>
            <person name="Squares S."/>
            <person name="Stevens K."/>
            <person name="Taylor K."/>
            <person name="Taylor R.G."/>
            <person name="Tivey A."/>
            <person name="Walsh S.V."/>
            <person name="Warren T."/>
            <person name="Whitehead S."/>
            <person name="Woodward J.R."/>
            <person name="Volckaert G."/>
            <person name="Aert R."/>
            <person name="Robben J."/>
            <person name="Grymonprez B."/>
            <person name="Weltjens I."/>
            <person name="Vanstreels E."/>
            <person name="Rieger M."/>
            <person name="Schaefer M."/>
            <person name="Mueller-Auer S."/>
            <person name="Gabel C."/>
            <person name="Fuchs M."/>
            <person name="Duesterhoeft A."/>
            <person name="Fritzc C."/>
            <person name="Holzer E."/>
            <person name="Moestl D."/>
            <person name="Hilbert H."/>
            <person name="Borzym K."/>
            <person name="Langer I."/>
            <person name="Beck A."/>
            <person name="Lehrach H."/>
            <person name="Reinhardt R."/>
            <person name="Pohl T.M."/>
            <person name="Eger P."/>
            <person name="Zimmermann W."/>
            <person name="Wedler H."/>
            <person name="Wambutt R."/>
            <person name="Purnelle B."/>
            <person name="Goffeau A."/>
            <person name="Cadieu E."/>
            <person name="Dreano S."/>
            <person name="Gloux S."/>
            <person name="Lelaure V."/>
            <person name="Mottier S."/>
            <person name="Galibert F."/>
            <person name="Aves S.J."/>
            <person name="Xiang Z."/>
            <person name="Hunt C."/>
            <person name="Moore K."/>
            <person name="Hurst S.M."/>
            <person name="Lucas M."/>
            <person name="Rochet M."/>
            <person name="Gaillardin C."/>
            <person name="Tallada V.A."/>
            <person name="Garzon A."/>
            <person name="Thode G."/>
            <person name="Daga R.R."/>
            <person name="Cruzado L."/>
            <person name="Jimenez J."/>
            <person name="Sanchez M."/>
            <person name="del Rey F."/>
            <person name="Benito J."/>
            <person name="Dominguez A."/>
            <person name="Revuelta J.L."/>
            <person name="Moreno S."/>
            <person name="Armstrong J."/>
            <person name="Forsburg S.L."/>
            <person name="Cerutti L."/>
            <person name="Lowe T."/>
            <person name="McCombie W.R."/>
            <person name="Paulsen I."/>
            <person name="Potashkin J."/>
            <person name="Shpakovski G.V."/>
            <person name="Ussery D."/>
            <person name="Barrell B.G."/>
            <person name="Nurse P."/>
        </authorList>
    </citation>
    <scope>NUCLEOTIDE SEQUENCE [LARGE SCALE GENOMIC DNA]</scope>
    <source>
        <strain>972 / ATCC 24843</strain>
    </source>
</reference>
<reference key="3">
    <citation type="journal article" date="2006" name="Nat. Biotechnol.">
        <title>ORFeome cloning and global analysis of protein localization in the fission yeast Schizosaccharomyces pombe.</title>
        <authorList>
            <person name="Matsuyama A."/>
            <person name="Arai R."/>
            <person name="Yashiroda Y."/>
            <person name="Shirai A."/>
            <person name="Kamata A."/>
            <person name="Sekido S."/>
            <person name="Kobayashi Y."/>
            <person name="Hashimoto A."/>
            <person name="Hamamoto M."/>
            <person name="Hiraoka Y."/>
            <person name="Horinouchi S."/>
            <person name="Yoshida M."/>
        </authorList>
    </citation>
    <scope>SUBCELLULAR LOCATION [LARGE SCALE ANALYSIS]</scope>
</reference>
<reference key="4">
    <citation type="journal article" date="2007" name="Cell">
        <title>SHREC, an effector complex for heterochromatic transcriptional silencing.</title>
        <authorList>
            <person name="Sugiyama T."/>
            <person name="Cam H.P."/>
            <person name="Sugiyama R."/>
            <person name="Noma K."/>
            <person name="Zofall M."/>
            <person name="Kobayashi R."/>
            <person name="Grewal S.I.S."/>
        </authorList>
    </citation>
    <scope>FUNCTION</scope>
    <scope>CATALYTIC ACTIVITY</scope>
    <scope>INTERACTION WITH CCQ1; CLR1; CLR2 AND MIT1</scope>
    <scope>SUBCELLULAR LOCATION</scope>
    <scope>MUTAGENESIS OF ASP-232</scope>
</reference>
<proteinExistence type="evidence at protein level"/>
<gene>
    <name type="primary">clr3</name>
    <name type="ORF">SPBC800.03</name>
</gene>
<sequence>MLASNSDGASTSVKPSDDAVNTVTPWSILLTNNKPMSGSENTLNNESHEMSQILKKSGLCYDPRMRFHATLSEVDDHPEDPRRVLRVFEAIKKAGYVSNVPSPSDVFLRIPAREATLEELLQVHSQEMYDRVTNTEKMSHEDLANLEKISDSLYYNNESAFCARLACGSAIETCTAVVTGQVKNAFAVVRPPGHHAEPHKPGGFCLFNNVSVTARSMLQRFPDKIKRVLIVDWDIHHGNGTQMAFYDDPNVLYVSLHRYENGRFYPGTNYGCAENCGEGPGLGRTVNIPWSCAGMGDGDYIYAFQRVVMPVAYEFDPDLVIVSCGFDAAAGDHIGQFLLTPAAYAHMTQMLMGLADGKVFISLEGGYNLDSISTSALAVAQSLLGIPPGRLHTTYACPQAVATINHVTKIQSQYWRCMRPKHFDANPKDAHVDRLHDVIRTYQAKKLFEDWKITNMPILRDSVSNVFNNQVLCSSNFFQKDNLLVIVHESPRVLGNGTSETNVLNLNDSLLVDPVSLYVEWAMQQDWGLIDINIPEVVTDGENAPVDILSEVKELCLYVWDNYVELSISKNIFFIGGGKAVHGLVNLASSRNVSDRVKCMVNFLGTEPLVGLKTASEEDLPTWYYRHSLVFVSSSNECWKKAKRAKRRYGRLMQSEHTETSDMMEQHYRAVTQYLLHLLQKARPTSQ</sequence>
<feature type="chain" id="PRO_0000114739" description="Histone deacetylase clr3">
    <location>
        <begin position="1"/>
        <end position="687"/>
    </location>
</feature>
<feature type="region of interest" description="Histone deacetylase">
    <location>
        <begin position="55"/>
        <end position="385"/>
    </location>
</feature>
<feature type="active site" evidence="1">
    <location>
        <position position="195"/>
    </location>
</feature>
<feature type="mutagenesis site" description="No histone deacetylase activity; weak silencing defect." evidence="2">
    <original>D</original>
    <variation>N</variation>
    <location>
        <position position="232"/>
    </location>
</feature>
<feature type="strand" evidence="4">
    <location>
        <begin position="57"/>
        <end position="61"/>
    </location>
</feature>
<feature type="helix" evidence="4">
    <location>
        <begin position="65"/>
        <end position="68"/>
    </location>
</feature>
<feature type="helix" evidence="4">
    <location>
        <begin position="82"/>
        <end position="93"/>
    </location>
</feature>
<feature type="strand" evidence="4">
    <location>
        <begin position="106"/>
        <end position="110"/>
    </location>
</feature>
<feature type="helix" evidence="4">
    <location>
        <begin position="117"/>
        <end position="129"/>
    </location>
</feature>
<feature type="helix" evidence="4">
    <location>
        <begin position="140"/>
        <end position="142"/>
    </location>
</feature>
<feature type="helix" evidence="4">
    <location>
        <begin position="146"/>
        <end position="151"/>
    </location>
</feature>
<feature type="helix" evidence="4">
    <location>
        <begin position="160"/>
        <end position="178"/>
    </location>
</feature>
<feature type="strand" evidence="4">
    <location>
        <begin position="181"/>
        <end position="188"/>
    </location>
</feature>
<feature type="helix" evidence="4">
    <location>
        <begin position="209"/>
        <end position="220"/>
    </location>
</feature>
<feature type="turn" evidence="4">
    <location>
        <begin position="222"/>
        <end position="224"/>
    </location>
</feature>
<feature type="strand" evidence="4">
    <location>
        <begin position="228"/>
        <end position="232"/>
    </location>
</feature>
<feature type="strand" evidence="4">
    <location>
        <begin position="234"/>
        <end position="236"/>
    </location>
</feature>
<feature type="helix" evidence="4">
    <location>
        <begin position="239"/>
        <end position="245"/>
    </location>
</feature>
<feature type="strand" evidence="4">
    <location>
        <begin position="249"/>
        <end position="258"/>
    </location>
</feature>
<feature type="turn" evidence="4">
    <location>
        <begin position="260"/>
        <end position="263"/>
    </location>
</feature>
<feature type="helix" evidence="4">
    <location>
        <begin position="269"/>
        <end position="271"/>
    </location>
</feature>
<feature type="helix" evidence="4">
    <location>
        <begin position="279"/>
        <end position="281"/>
    </location>
</feature>
<feature type="strand" evidence="4">
    <location>
        <begin position="285"/>
        <end position="293"/>
    </location>
</feature>
<feature type="helix" evidence="4">
    <location>
        <begin position="297"/>
        <end position="306"/>
    </location>
</feature>
<feature type="helix" evidence="4">
    <location>
        <begin position="308"/>
        <end position="315"/>
    </location>
</feature>
<feature type="strand" evidence="4">
    <location>
        <begin position="318"/>
        <end position="324"/>
    </location>
</feature>
<feature type="turn" evidence="4">
    <location>
        <begin position="333"/>
        <end position="335"/>
    </location>
</feature>
<feature type="helix" evidence="4">
    <location>
        <begin position="341"/>
        <end position="351"/>
    </location>
</feature>
<feature type="helix" evidence="4">
    <location>
        <begin position="355"/>
        <end position="357"/>
    </location>
</feature>
<feature type="strand" evidence="4">
    <location>
        <begin position="359"/>
        <end position="363"/>
    </location>
</feature>
<feature type="helix" evidence="4">
    <location>
        <begin position="369"/>
        <end position="383"/>
    </location>
</feature>
<feature type="helix" evidence="4">
    <location>
        <begin position="398"/>
        <end position="411"/>
    </location>
</feature>
<feature type="turn" evidence="4">
    <location>
        <begin position="412"/>
        <end position="414"/>
    </location>
</feature>
<feature type="helix" evidence="4">
    <location>
        <begin position="435"/>
        <end position="451"/>
    </location>
</feature>
<feature type="strand" evidence="4">
    <location>
        <begin position="470"/>
        <end position="473"/>
    </location>
</feature>
<feature type="helix" evidence="4">
    <location>
        <begin position="477"/>
        <end position="479"/>
    </location>
</feature>
<feature type="strand" evidence="4">
    <location>
        <begin position="481"/>
        <end position="488"/>
    </location>
</feature>
<feature type="strand" evidence="4">
    <location>
        <begin position="492"/>
        <end position="494"/>
    </location>
</feature>
<feature type="turn" evidence="4">
    <location>
        <begin position="506"/>
        <end position="508"/>
    </location>
</feature>
<feature type="strand" evidence="4">
    <location>
        <begin position="510"/>
        <end position="512"/>
    </location>
</feature>
<feature type="helix" evidence="4">
    <location>
        <begin position="515"/>
        <end position="524"/>
    </location>
</feature>
<feature type="strand" evidence="4">
    <location>
        <begin position="528"/>
        <end position="533"/>
    </location>
</feature>
<feature type="helix" evidence="4">
    <location>
        <begin position="548"/>
        <end position="562"/>
    </location>
</feature>
<feature type="turn" evidence="4">
    <location>
        <begin position="563"/>
        <end position="566"/>
    </location>
</feature>
<feature type="strand" evidence="4">
    <location>
        <begin position="570"/>
        <end position="577"/>
    </location>
</feature>
<feature type="helix" evidence="4">
    <location>
        <begin position="580"/>
        <end position="590"/>
    </location>
</feature>
<feature type="turn" evidence="4">
    <location>
        <begin position="594"/>
        <end position="596"/>
    </location>
</feature>
<feature type="strand" evidence="4">
    <location>
        <begin position="597"/>
        <end position="603"/>
    </location>
</feature>
<feature type="helix" evidence="4">
    <location>
        <begin position="619"/>
        <end position="626"/>
    </location>
</feature>
<feature type="strand" evidence="4">
    <location>
        <begin position="628"/>
        <end position="632"/>
    </location>
</feature>
<feature type="helix" evidence="4">
    <location>
        <begin position="637"/>
        <end position="639"/>
    </location>
</feature>
<feature type="helix" evidence="4">
    <location>
        <begin position="647"/>
        <end position="649"/>
    </location>
</feature>
<feature type="strand" evidence="4">
    <location>
        <begin position="652"/>
        <end position="654"/>
    </location>
</feature>
<feature type="helix" evidence="4">
    <location>
        <begin position="660"/>
        <end position="666"/>
    </location>
</feature>
<feature type="helix" evidence="4">
    <location>
        <begin position="668"/>
        <end position="678"/>
    </location>
</feature>
<dbReference type="EC" id="3.5.1.98" evidence="2"/>
<dbReference type="EMBL" id="AF064207">
    <property type="protein sequence ID" value="AAD05212.1"/>
    <property type="molecule type" value="Genomic_DNA"/>
</dbReference>
<dbReference type="EMBL" id="CU329671">
    <property type="protein sequence ID" value="CAC01518.1"/>
    <property type="molecule type" value="Genomic_DNA"/>
</dbReference>
<dbReference type="PIR" id="T43797">
    <property type="entry name" value="T43797"/>
</dbReference>
<dbReference type="RefSeq" id="NP_595104.1">
    <property type="nucleotide sequence ID" value="NM_001021011.2"/>
</dbReference>
<dbReference type="PDB" id="5IKK">
    <property type="method" value="X-ray"/>
    <property type="resolution" value="2.40 A"/>
    <property type="chains" value="A=31-687"/>
</dbReference>
<dbReference type="PDBsum" id="5IKK"/>
<dbReference type="SMR" id="P56523"/>
<dbReference type="BioGRID" id="277339">
    <property type="interactions" value="162"/>
</dbReference>
<dbReference type="ComplexPortal" id="CPX-9261">
    <property type="entry name" value="Snf2/HDAC repressor complex"/>
</dbReference>
<dbReference type="DIP" id="DIP-59446N"/>
<dbReference type="FunCoup" id="P56523">
    <property type="interactions" value="79"/>
</dbReference>
<dbReference type="IntAct" id="P56523">
    <property type="interactions" value="1"/>
</dbReference>
<dbReference type="STRING" id="284812.P56523"/>
<dbReference type="ESTHER" id="schpo-clr3">
    <property type="family name" value="Arb2_domain"/>
</dbReference>
<dbReference type="iPTMnet" id="P56523"/>
<dbReference type="PaxDb" id="4896-SPBC800.03.1"/>
<dbReference type="EnsemblFungi" id="SPBC800.03.1">
    <property type="protein sequence ID" value="SPBC800.03.1:pep"/>
    <property type="gene ID" value="SPBC800.03"/>
</dbReference>
<dbReference type="GeneID" id="2540821"/>
<dbReference type="KEGG" id="spo:2540821"/>
<dbReference type="PomBase" id="SPBC800.03">
    <property type="gene designation" value="clr3"/>
</dbReference>
<dbReference type="VEuPathDB" id="FungiDB:SPBC800.03"/>
<dbReference type="eggNOG" id="KOG1343">
    <property type="taxonomic scope" value="Eukaryota"/>
</dbReference>
<dbReference type="HOGENOM" id="CLU_007727_4_0_1"/>
<dbReference type="InParanoid" id="P56523"/>
<dbReference type="OMA" id="CFVSPAC"/>
<dbReference type="PhylomeDB" id="P56523"/>
<dbReference type="Reactome" id="R-SPO-3214815">
    <property type="pathway name" value="HDACs deacetylate histones"/>
</dbReference>
<dbReference type="Reactome" id="R-SPO-3371511">
    <property type="pathway name" value="HSF1 activation"/>
</dbReference>
<dbReference type="Reactome" id="R-SPO-4551638">
    <property type="pathway name" value="SUMOylation of chromatin organization proteins"/>
</dbReference>
<dbReference type="EvolutionaryTrace" id="P56523"/>
<dbReference type="PRO" id="PR:P56523"/>
<dbReference type="Proteomes" id="UP000002485">
    <property type="component" value="Chromosome II"/>
</dbReference>
<dbReference type="GO" id="GO:0000785">
    <property type="term" value="C:chromatin"/>
    <property type="evidence" value="ECO:0000314"/>
    <property type="project" value="PomBase"/>
</dbReference>
<dbReference type="GO" id="GO:0000791">
    <property type="term" value="C:euchromatin"/>
    <property type="evidence" value="ECO:0000314"/>
    <property type="project" value="PomBase"/>
</dbReference>
<dbReference type="GO" id="GO:1990342">
    <property type="term" value="C:heterochromatin island"/>
    <property type="evidence" value="ECO:0000314"/>
    <property type="project" value="PomBase"/>
</dbReference>
<dbReference type="GO" id="GO:0000118">
    <property type="term" value="C:histone deacetylase complex"/>
    <property type="evidence" value="ECO:0000318"/>
    <property type="project" value="GO_Central"/>
</dbReference>
<dbReference type="GO" id="GO:0031934">
    <property type="term" value="C:mating-type region heterochromatin"/>
    <property type="evidence" value="ECO:0000314"/>
    <property type="project" value="PomBase"/>
</dbReference>
<dbReference type="GO" id="GO:0005730">
    <property type="term" value="C:nucleolus"/>
    <property type="evidence" value="ECO:0000314"/>
    <property type="project" value="PomBase"/>
</dbReference>
<dbReference type="GO" id="GO:0005634">
    <property type="term" value="C:nucleus"/>
    <property type="evidence" value="ECO:0007005"/>
    <property type="project" value="PomBase"/>
</dbReference>
<dbReference type="GO" id="GO:0005721">
    <property type="term" value="C:pericentric heterochromatin"/>
    <property type="evidence" value="ECO:0000314"/>
    <property type="project" value="PomBase"/>
</dbReference>
<dbReference type="GO" id="GO:0033553">
    <property type="term" value="C:rDNA heterochromatin"/>
    <property type="evidence" value="ECO:0000314"/>
    <property type="project" value="PomBase"/>
</dbReference>
<dbReference type="GO" id="GO:0070824">
    <property type="term" value="C:SHREC complex"/>
    <property type="evidence" value="ECO:0000314"/>
    <property type="project" value="PomBase"/>
</dbReference>
<dbReference type="GO" id="GO:0140720">
    <property type="term" value="C:subtelomeric heterochromatin"/>
    <property type="evidence" value="ECO:0000314"/>
    <property type="project" value="PomBase"/>
</dbReference>
<dbReference type="GO" id="GO:0004407">
    <property type="term" value="F:histone deacetylase activity"/>
    <property type="evidence" value="ECO:0000314"/>
    <property type="project" value="PomBase"/>
</dbReference>
<dbReference type="GO" id="GO:0031078">
    <property type="term" value="F:histone H3K14 deacetylase activity, hydrolytic mechanism"/>
    <property type="evidence" value="ECO:0000315"/>
    <property type="project" value="PomBase"/>
</dbReference>
<dbReference type="GO" id="GO:0006325">
    <property type="term" value="P:chromatin organization"/>
    <property type="evidence" value="ECO:0000315"/>
    <property type="project" value="PomBase"/>
</dbReference>
<dbReference type="GO" id="GO:0040029">
    <property type="term" value="P:epigenetic regulation of gene expression"/>
    <property type="evidence" value="ECO:0000315"/>
    <property type="project" value="PomBase"/>
</dbReference>
<dbReference type="GO" id="GO:0031508">
    <property type="term" value="P:pericentric heterochromatin formation"/>
    <property type="evidence" value="ECO:0000315"/>
    <property type="project" value="PomBase"/>
</dbReference>
<dbReference type="GO" id="GO:0000183">
    <property type="term" value="P:rDNA heterochromatin formation"/>
    <property type="evidence" value="ECO:0000315"/>
    <property type="project" value="PomBase"/>
</dbReference>
<dbReference type="GO" id="GO:0030466">
    <property type="term" value="P:silent mating-type cassette heterochromatin formation"/>
    <property type="evidence" value="ECO:0000315"/>
    <property type="project" value="PomBase"/>
</dbReference>
<dbReference type="GO" id="GO:1902794">
    <property type="term" value="P:siRNA-independent facultative heterochromatin formation"/>
    <property type="evidence" value="ECO:0000315"/>
    <property type="project" value="PomBase"/>
</dbReference>
<dbReference type="GO" id="GO:0031509">
    <property type="term" value="P:subtelomeric heterochromatin formation"/>
    <property type="evidence" value="ECO:0000315"/>
    <property type="project" value="PomBase"/>
</dbReference>
<dbReference type="CDD" id="cd11600">
    <property type="entry name" value="HDAC_Clr3"/>
    <property type="match status" value="1"/>
</dbReference>
<dbReference type="FunFam" id="3.40.800.20:FF:000005">
    <property type="entry name" value="histone deacetylase 6"/>
    <property type="match status" value="1"/>
</dbReference>
<dbReference type="Gene3D" id="3.40.800.20">
    <property type="entry name" value="Histone deacetylase domain"/>
    <property type="match status" value="1"/>
</dbReference>
<dbReference type="InterPro" id="IPR019154">
    <property type="entry name" value="Arb2-like_domain"/>
</dbReference>
<dbReference type="InterPro" id="IPR050284">
    <property type="entry name" value="HDAC_PDAC"/>
</dbReference>
<dbReference type="InterPro" id="IPR000286">
    <property type="entry name" value="His_deacetylse"/>
</dbReference>
<dbReference type="InterPro" id="IPR023801">
    <property type="entry name" value="His_deacetylse_dom"/>
</dbReference>
<dbReference type="InterPro" id="IPR037138">
    <property type="entry name" value="His_deacetylse_dom_sf"/>
</dbReference>
<dbReference type="InterPro" id="IPR017321">
    <property type="entry name" value="Hist_deAcase_II_yeast"/>
</dbReference>
<dbReference type="InterPro" id="IPR023696">
    <property type="entry name" value="Ureohydrolase_dom_sf"/>
</dbReference>
<dbReference type="PANTHER" id="PTHR10625:SF5">
    <property type="entry name" value="HISTONE DEACETYLASE"/>
    <property type="match status" value="1"/>
</dbReference>
<dbReference type="PANTHER" id="PTHR10625">
    <property type="entry name" value="HISTONE DEACETYLASE HDAC1-RELATED"/>
    <property type="match status" value="1"/>
</dbReference>
<dbReference type="Pfam" id="PF09757">
    <property type="entry name" value="Arb2-like"/>
    <property type="match status" value="1"/>
</dbReference>
<dbReference type="Pfam" id="PF00850">
    <property type="entry name" value="Hist_deacetyl"/>
    <property type="match status" value="1"/>
</dbReference>
<dbReference type="PIRSF" id="PIRSF037919">
    <property type="entry name" value="HDAC_II_yeast"/>
    <property type="match status" value="1"/>
</dbReference>
<dbReference type="PRINTS" id="PR01270">
    <property type="entry name" value="HDASUPER"/>
</dbReference>
<dbReference type="SUPFAM" id="SSF52768">
    <property type="entry name" value="Arginase/deacetylase"/>
    <property type="match status" value="1"/>
</dbReference>
<comment type="function">
    <text evidence="2">Responsible for the deacetylation of lysine residues on the N-terminal part of the core histones (H2A, H2B, H3 and H4). Histone deacetylation gives a tag for epigenetic repression and plays an important role in transcriptional regulation, cell cycle progression and developmental events. Histone deacetylases act via the formation of large multiprotein complexes. Required for proper positioning of nucleosomes at heterochromatic loci and for transcriptional gene silencing (TGS) function of the Snf2/Hdac-containing repressor complex (SHREC).</text>
</comment>
<comment type="catalytic activity">
    <reaction evidence="2">
        <text>N(6)-acetyl-L-lysyl-[histone] + H2O = L-lysyl-[histone] + acetate</text>
        <dbReference type="Rhea" id="RHEA:58196"/>
        <dbReference type="Rhea" id="RHEA-COMP:9845"/>
        <dbReference type="Rhea" id="RHEA-COMP:11338"/>
        <dbReference type="ChEBI" id="CHEBI:15377"/>
        <dbReference type="ChEBI" id="CHEBI:29969"/>
        <dbReference type="ChEBI" id="CHEBI:30089"/>
        <dbReference type="ChEBI" id="CHEBI:61930"/>
        <dbReference type="EC" id="3.5.1.98"/>
    </reaction>
</comment>
<comment type="subunit">
    <text evidence="2">Interacts with ccq1, clr1, clr2 and mit1.</text>
</comment>
<comment type="subcellular location">
    <subcellularLocation>
        <location evidence="2">Nucleus</location>
    </subcellularLocation>
    <subcellularLocation>
        <location evidence="2">Chromosome</location>
        <location evidence="2">Centromere</location>
    </subcellularLocation>
    <subcellularLocation>
        <location evidence="2">Chromosome</location>
        <location evidence="2">Telomere</location>
    </subcellularLocation>
    <text evidence="2">Associates with major heterochromatin, centromeres, sub-telomeres, rDNA and the mat locus.</text>
</comment>
<comment type="similarity">
    <text evidence="3">Belongs to the histone deacetylase family. HD type 2 subfamily.</text>
</comment>
<accession>P56523</accession>
<keyword id="KW-0002">3D-structure</keyword>
<keyword id="KW-0137">Centromere</keyword>
<keyword id="KW-0156">Chromatin regulator</keyword>
<keyword id="KW-0158">Chromosome</keyword>
<keyword id="KW-0378">Hydrolase</keyword>
<keyword id="KW-0539">Nucleus</keyword>
<keyword id="KW-1185">Reference proteome</keyword>
<keyword id="KW-0678">Repressor</keyword>
<keyword id="KW-0779">Telomere</keyword>
<keyword id="KW-0804">Transcription</keyword>
<keyword id="KW-0805">Transcription regulation</keyword>
<evidence type="ECO:0000250" key="1"/>
<evidence type="ECO:0000269" key="2">
    <source>
    </source>
</evidence>
<evidence type="ECO:0000305" key="3"/>
<evidence type="ECO:0007829" key="4">
    <source>
        <dbReference type="PDB" id="5IKK"/>
    </source>
</evidence>
<name>CLR3_SCHPO</name>
<organism>
    <name type="scientific">Schizosaccharomyces pombe (strain 972 / ATCC 24843)</name>
    <name type="common">Fission yeast</name>
    <dbReference type="NCBI Taxonomy" id="284812"/>
    <lineage>
        <taxon>Eukaryota</taxon>
        <taxon>Fungi</taxon>
        <taxon>Dikarya</taxon>
        <taxon>Ascomycota</taxon>
        <taxon>Taphrinomycotina</taxon>
        <taxon>Schizosaccharomycetes</taxon>
        <taxon>Schizosaccharomycetales</taxon>
        <taxon>Schizosaccharomycetaceae</taxon>
        <taxon>Schizosaccharomyces</taxon>
    </lineage>
</organism>
<protein>
    <recommendedName>
        <fullName>Histone deacetylase clr3</fullName>
        <ecNumber evidence="2">3.5.1.98</ecNumber>
    </recommendedName>
    <alternativeName>
        <fullName>Cryptic loci regulator 3</fullName>
    </alternativeName>
</protein>